<reference key="1">
    <citation type="journal article" date="2006" name="Peptides">
        <title>The Chinese bamboo leaf odorous frog (Rana (odorrana) versabilis) and north american rana frogs share the same families of skin antimicrobial peptides.</title>
        <authorList>
            <person name="Chen T."/>
            <person name="Zhou M."/>
            <person name="Rao P."/>
            <person name="Walker B."/>
            <person name="Shaw C."/>
        </authorList>
    </citation>
    <scope>NUCLEOTIDE SEQUENCE [MRNA]</scope>
    <scope>MASS SPECTROMETRY</scope>
    <source>
        <tissue>Skin secretion</tissue>
    </source>
</reference>
<sequence length="71" mass="7915">MFTLKKSFLLLFFLGTITLSLCEQERGADEDDGVEMTEEEVKRGLLDTIKNTAKNLAVGLLDKIKCKMTGC</sequence>
<feature type="signal peptide" evidence="2">
    <location>
        <begin position="1"/>
        <end position="22"/>
    </location>
</feature>
<feature type="propeptide" id="PRO_0000268215">
    <location>
        <begin position="23"/>
        <end position="43"/>
    </location>
</feature>
<feature type="peptide" id="PRO_0000268216" description="Ranatuerin-2Va">
    <location>
        <begin position="44"/>
        <end position="71"/>
    </location>
</feature>
<feature type="disulfide bond">
    <location>
        <begin position="66"/>
        <end position="71"/>
    </location>
</feature>
<proteinExistence type="evidence at protein level"/>
<organism>
    <name type="scientific">Odorrana versabilis</name>
    <name type="common">Chinese bamboo leaf odorous frog</name>
    <name type="synonym">Rana versabilis</name>
    <dbReference type="NCBI Taxonomy" id="326940"/>
    <lineage>
        <taxon>Eukaryota</taxon>
        <taxon>Metazoa</taxon>
        <taxon>Chordata</taxon>
        <taxon>Craniata</taxon>
        <taxon>Vertebrata</taxon>
        <taxon>Euteleostomi</taxon>
        <taxon>Amphibia</taxon>
        <taxon>Batrachia</taxon>
        <taxon>Anura</taxon>
        <taxon>Neobatrachia</taxon>
        <taxon>Ranoidea</taxon>
        <taxon>Ranidae</taxon>
        <taxon>Odorrana</taxon>
    </lineage>
</organism>
<keyword id="KW-0878">Amphibian defense peptide</keyword>
<keyword id="KW-0044">Antibiotic</keyword>
<keyword id="KW-0929">Antimicrobial</keyword>
<keyword id="KW-0165">Cleavage on pair of basic residues</keyword>
<keyword id="KW-1015">Disulfide bond</keyword>
<keyword id="KW-0964">Secreted</keyword>
<keyword id="KW-0732">Signal</keyword>
<dbReference type="EMBL" id="AM113509">
    <property type="protein sequence ID" value="CAJ34605.1"/>
    <property type="molecule type" value="mRNA"/>
</dbReference>
<dbReference type="SMR" id="Q1JS92"/>
<dbReference type="GO" id="GO:0005576">
    <property type="term" value="C:extracellular region"/>
    <property type="evidence" value="ECO:0007669"/>
    <property type="project" value="UniProtKB-SubCell"/>
</dbReference>
<dbReference type="GO" id="GO:0050829">
    <property type="term" value="P:defense response to Gram-negative bacterium"/>
    <property type="evidence" value="ECO:0007669"/>
    <property type="project" value="UniProtKB-ARBA"/>
</dbReference>
<dbReference type="GO" id="GO:0050830">
    <property type="term" value="P:defense response to Gram-positive bacterium"/>
    <property type="evidence" value="ECO:0007669"/>
    <property type="project" value="UniProtKB-ARBA"/>
</dbReference>
<dbReference type="InterPro" id="IPR012521">
    <property type="entry name" value="Antimicrobial_frog_2"/>
</dbReference>
<dbReference type="InterPro" id="IPR004275">
    <property type="entry name" value="Frog_antimicrobial_propeptide"/>
</dbReference>
<dbReference type="Pfam" id="PF08023">
    <property type="entry name" value="Antimicrobial_2"/>
    <property type="match status" value="1"/>
</dbReference>
<dbReference type="Pfam" id="PF03032">
    <property type="entry name" value="FSAP_sig_propep"/>
    <property type="match status" value="1"/>
</dbReference>
<name>RN2A_ODOVE</name>
<accession>Q1JS92</accession>
<comment type="function">
    <text evidence="1">Antimicrobial peptide.</text>
</comment>
<comment type="subcellular location">
    <subcellularLocation>
        <location>Secreted</location>
    </subcellularLocation>
</comment>
<comment type="tissue specificity">
    <text>Expressed by the skin glands.</text>
</comment>
<comment type="mass spectrometry" mass="2960.6" method="MALDI" evidence="3"/>
<comment type="similarity">
    <text evidence="4">Belongs to the frog skin active peptide (FSAP) family. Ranatuerin subfamily.</text>
</comment>
<protein>
    <recommendedName>
        <fullName>Ranatuerin-2Va</fullName>
        <shortName>ranat2Va</shortName>
    </recommendedName>
    <alternativeName>
        <fullName>2VEa</fullName>
    </alternativeName>
</protein>
<evidence type="ECO:0000250" key="1"/>
<evidence type="ECO:0000255" key="2"/>
<evidence type="ECO:0000269" key="3">
    <source>
    </source>
</evidence>
<evidence type="ECO:0000305" key="4"/>